<comment type="catalytic activity">
    <reaction evidence="1">
        <text>L-glutamine + H2O = L-glutamate + NH4(+)</text>
        <dbReference type="Rhea" id="RHEA:15889"/>
        <dbReference type="ChEBI" id="CHEBI:15377"/>
        <dbReference type="ChEBI" id="CHEBI:28938"/>
        <dbReference type="ChEBI" id="CHEBI:29985"/>
        <dbReference type="ChEBI" id="CHEBI:58359"/>
        <dbReference type="EC" id="3.5.1.2"/>
    </reaction>
</comment>
<comment type="subunit">
    <text evidence="1">Homotetramer.</text>
</comment>
<comment type="similarity">
    <text evidence="1">Belongs to the glutaminase family.</text>
</comment>
<comment type="sequence caution" evidence="2">
    <conflict type="erroneous initiation">
        <sequence resource="EMBL-CDS" id="ABR77067"/>
    </conflict>
</comment>
<gene>
    <name evidence="1" type="primary">glsA</name>
    <name type="ordered locus">KPN78578_16060</name>
    <name type="ORF">KPN_01636</name>
</gene>
<feature type="chain" id="PRO_0000336030" description="Glutaminase">
    <location>
        <begin position="1"/>
        <end position="308"/>
    </location>
</feature>
<feature type="binding site" evidence="1">
    <location>
        <position position="66"/>
    </location>
    <ligand>
        <name>substrate</name>
    </ligand>
</feature>
<feature type="binding site" evidence="1">
    <location>
        <position position="117"/>
    </location>
    <ligand>
        <name>substrate</name>
    </ligand>
</feature>
<feature type="binding site" evidence="1">
    <location>
        <position position="161"/>
    </location>
    <ligand>
        <name>substrate</name>
    </ligand>
</feature>
<feature type="binding site" evidence="1">
    <location>
        <position position="168"/>
    </location>
    <ligand>
        <name>substrate</name>
    </ligand>
</feature>
<feature type="binding site" evidence="1">
    <location>
        <position position="192"/>
    </location>
    <ligand>
        <name>substrate</name>
    </ligand>
</feature>
<feature type="binding site" evidence="1">
    <location>
        <position position="244"/>
    </location>
    <ligand>
        <name>substrate</name>
    </ligand>
</feature>
<feature type="binding site" evidence="1">
    <location>
        <position position="262"/>
    </location>
    <ligand>
        <name>substrate</name>
    </ligand>
</feature>
<name>GLSA_KLEP7</name>
<proteinExistence type="inferred from homology"/>
<evidence type="ECO:0000255" key="1">
    <source>
        <dbReference type="HAMAP-Rule" id="MF_00313"/>
    </source>
</evidence>
<evidence type="ECO:0000305" key="2"/>
<accession>A6T8Z6</accession>
<dbReference type="EC" id="3.5.1.2" evidence="1"/>
<dbReference type="EMBL" id="CP000647">
    <property type="protein sequence ID" value="ABR77067.1"/>
    <property type="status" value="ALT_INIT"/>
    <property type="molecule type" value="Genomic_DNA"/>
</dbReference>
<dbReference type="SMR" id="A6T8Z6"/>
<dbReference type="STRING" id="272620.KPN_01636"/>
<dbReference type="PaxDb" id="272620-KPN_01636"/>
<dbReference type="EnsemblBacteria" id="ABR77067">
    <property type="protein sequence ID" value="ABR77067"/>
    <property type="gene ID" value="KPN_01636"/>
</dbReference>
<dbReference type="KEGG" id="kpn:KPN_01636"/>
<dbReference type="HOGENOM" id="CLU_027932_1_1_6"/>
<dbReference type="Proteomes" id="UP000000265">
    <property type="component" value="Chromosome"/>
</dbReference>
<dbReference type="GO" id="GO:0004359">
    <property type="term" value="F:glutaminase activity"/>
    <property type="evidence" value="ECO:0007669"/>
    <property type="project" value="UniProtKB-UniRule"/>
</dbReference>
<dbReference type="GO" id="GO:0006537">
    <property type="term" value="P:glutamate biosynthetic process"/>
    <property type="evidence" value="ECO:0007669"/>
    <property type="project" value="TreeGrafter"/>
</dbReference>
<dbReference type="GO" id="GO:0006543">
    <property type="term" value="P:glutamine catabolic process"/>
    <property type="evidence" value="ECO:0007669"/>
    <property type="project" value="TreeGrafter"/>
</dbReference>
<dbReference type="FunFam" id="3.40.710.10:FF:000005">
    <property type="entry name" value="Glutaminase"/>
    <property type="match status" value="1"/>
</dbReference>
<dbReference type="Gene3D" id="3.40.710.10">
    <property type="entry name" value="DD-peptidase/beta-lactamase superfamily"/>
    <property type="match status" value="1"/>
</dbReference>
<dbReference type="HAMAP" id="MF_00313">
    <property type="entry name" value="Glutaminase"/>
    <property type="match status" value="1"/>
</dbReference>
<dbReference type="InterPro" id="IPR012338">
    <property type="entry name" value="Beta-lactam/transpept-like"/>
</dbReference>
<dbReference type="InterPro" id="IPR015868">
    <property type="entry name" value="Glutaminase"/>
</dbReference>
<dbReference type="NCBIfam" id="TIGR03814">
    <property type="entry name" value="Gln_ase"/>
    <property type="match status" value="1"/>
</dbReference>
<dbReference type="NCBIfam" id="NF002132">
    <property type="entry name" value="PRK00971.1-1"/>
    <property type="match status" value="1"/>
</dbReference>
<dbReference type="NCBIfam" id="NF002133">
    <property type="entry name" value="PRK00971.1-2"/>
    <property type="match status" value="1"/>
</dbReference>
<dbReference type="PANTHER" id="PTHR12544">
    <property type="entry name" value="GLUTAMINASE"/>
    <property type="match status" value="1"/>
</dbReference>
<dbReference type="PANTHER" id="PTHR12544:SF29">
    <property type="entry name" value="GLUTAMINASE"/>
    <property type="match status" value="1"/>
</dbReference>
<dbReference type="Pfam" id="PF04960">
    <property type="entry name" value="Glutaminase"/>
    <property type="match status" value="1"/>
</dbReference>
<dbReference type="SUPFAM" id="SSF56601">
    <property type="entry name" value="beta-lactamase/transpeptidase-like"/>
    <property type="match status" value="1"/>
</dbReference>
<reference key="1">
    <citation type="submission" date="2006-09" db="EMBL/GenBank/DDBJ databases">
        <authorList>
            <consortium name="The Klebsiella pneumonia Genome Sequencing Project"/>
            <person name="McClelland M."/>
            <person name="Sanderson E.K."/>
            <person name="Spieth J."/>
            <person name="Clifton W.S."/>
            <person name="Latreille P."/>
            <person name="Sabo A."/>
            <person name="Pepin K."/>
            <person name="Bhonagiri V."/>
            <person name="Porwollik S."/>
            <person name="Ali J."/>
            <person name="Wilson R.K."/>
        </authorList>
    </citation>
    <scope>NUCLEOTIDE SEQUENCE [LARGE SCALE GENOMIC DNA]</scope>
    <source>
        <strain>ATCC 700721 / MGH 78578</strain>
    </source>
</reference>
<organism>
    <name type="scientific">Klebsiella pneumoniae subsp. pneumoniae (strain ATCC 700721 / MGH 78578)</name>
    <dbReference type="NCBI Taxonomy" id="272620"/>
    <lineage>
        <taxon>Bacteria</taxon>
        <taxon>Pseudomonadati</taxon>
        <taxon>Pseudomonadota</taxon>
        <taxon>Gammaproteobacteria</taxon>
        <taxon>Enterobacterales</taxon>
        <taxon>Enterobacteriaceae</taxon>
        <taxon>Klebsiella/Raoultella group</taxon>
        <taxon>Klebsiella</taxon>
        <taxon>Klebsiella pneumoniae complex</taxon>
    </lineage>
</organism>
<sequence length="308" mass="33521">MATVINNAMLEAILAEIRPLIGRGKVADYIPALASVSGDKLGIAISTVDGQHFAAGDAHERFSIQSISKVLSLVVAMNHYQEEEIWQRVGKDPSGQPFNSLLQLEIEQGKPRNPFINAGALVVCDMLQSRLSAPRQRMLEIVRRLSGVADIAYDPVVARSEFEHSARNAAIAWLMKSFGNFHNDVATVLQNYFHYCSLEMSCVELARTFLFLADRGIAPHLDAPVIAPIQSRQVNALMMTSGMYQNAGEFAWRVGLPAKSGVGGGIVAIVPQEMAIAVWSPELDDAGNSLAGVAMLEKLTQRMGRSVF</sequence>
<protein>
    <recommendedName>
        <fullName evidence="1">Glutaminase</fullName>
        <ecNumber evidence="1">3.5.1.2</ecNumber>
    </recommendedName>
</protein>
<keyword id="KW-0378">Hydrolase</keyword>